<sequence length="190" mass="21105">MRAFKVTRDTNETKIHLELNIDGTGKYAITTGIAFFDHVLSSFAKHGAFDLKLDVLGDLEIDDHHTVEDVGIVLGKAFENMEKKNIKRFGWAIIPMDEAKASVSVDIGGRPYVVGDYTPSTEKIGNFSTENVVHFFESFSNNAKINLHFEVTGENEHHKVEALFKAFGVAMDMATQIDERKGIVSTKGVI</sequence>
<proteinExistence type="inferred from homology"/>
<organism>
    <name type="scientific">Methanococcus maripaludis (strain C7 / ATCC BAA-1331)</name>
    <dbReference type="NCBI Taxonomy" id="426368"/>
    <lineage>
        <taxon>Archaea</taxon>
        <taxon>Methanobacteriati</taxon>
        <taxon>Methanobacteriota</taxon>
        <taxon>Methanomada group</taxon>
        <taxon>Methanococci</taxon>
        <taxon>Methanococcales</taxon>
        <taxon>Methanococcaceae</taxon>
        <taxon>Methanococcus</taxon>
    </lineage>
</organism>
<dbReference type="EC" id="4.2.1.19" evidence="1"/>
<dbReference type="EMBL" id="CP000745">
    <property type="protein sequence ID" value="ABR66625.1"/>
    <property type="molecule type" value="Genomic_DNA"/>
</dbReference>
<dbReference type="SMR" id="A6VJJ9"/>
<dbReference type="STRING" id="426368.MmarC7_1567"/>
<dbReference type="KEGG" id="mmz:MmarC7_1567"/>
<dbReference type="eggNOG" id="arCOG04398">
    <property type="taxonomic scope" value="Archaea"/>
</dbReference>
<dbReference type="HOGENOM" id="CLU_044308_2_0_2"/>
<dbReference type="OrthoDB" id="103579at2157"/>
<dbReference type="UniPathway" id="UPA00031">
    <property type="reaction ID" value="UER00011"/>
</dbReference>
<dbReference type="GO" id="GO:0005737">
    <property type="term" value="C:cytoplasm"/>
    <property type="evidence" value="ECO:0007669"/>
    <property type="project" value="UniProtKB-SubCell"/>
</dbReference>
<dbReference type="GO" id="GO:0004424">
    <property type="term" value="F:imidazoleglycerol-phosphate dehydratase activity"/>
    <property type="evidence" value="ECO:0007669"/>
    <property type="project" value="UniProtKB-UniRule"/>
</dbReference>
<dbReference type="GO" id="GO:0000105">
    <property type="term" value="P:L-histidine biosynthetic process"/>
    <property type="evidence" value="ECO:0007669"/>
    <property type="project" value="UniProtKB-UniRule"/>
</dbReference>
<dbReference type="CDD" id="cd07914">
    <property type="entry name" value="IGPD"/>
    <property type="match status" value="1"/>
</dbReference>
<dbReference type="FunFam" id="3.30.230.40:FF:000001">
    <property type="entry name" value="Imidazoleglycerol-phosphate dehydratase HisB"/>
    <property type="match status" value="1"/>
</dbReference>
<dbReference type="FunFam" id="3.30.230.40:FF:000003">
    <property type="entry name" value="Imidazoleglycerol-phosphate dehydratase HisB"/>
    <property type="match status" value="1"/>
</dbReference>
<dbReference type="Gene3D" id="3.30.230.40">
    <property type="entry name" value="Imidazole glycerol phosphate dehydratase, domain 1"/>
    <property type="match status" value="2"/>
</dbReference>
<dbReference type="HAMAP" id="MF_00076">
    <property type="entry name" value="HisB"/>
    <property type="match status" value="1"/>
</dbReference>
<dbReference type="InterPro" id="IPR038494">
    <property type="entry name" value="IGPD_sf"/>
</dbReference>
<dbReference type="InterPro" id="IPR000807">
    <property type="entry name" value="ImidazoleglycerolP_deHydtase"/>
</dbReference>
<dbReference type="InterPro" id="IPR020565">
    <property type="entry name" value="ImidazoleglycerP_deHydtase_CS"/>
</dbReference>
<dbReference type="InterPro" id="IPR020568">
    <property type="entry name" value="Ribosomal_Su5_D2-typ_SF"/>
</dbReference>
<dbReference type="NCBIfam" id="NF002111">
    <property type="entry name" value="PRK00951.2-1"/>
    <property type="match status" value="1"/>
</dbReference>
<dbReference type="NCBIfam" id="NF002113">
    <property type="entry name" value="PRK00951.2-3"/>
    <property type="match status" value="1"/>
</dbReference>
<dbReference type="NCBIfam" id="NF002114">
    <property type="entry name" value="PRK00951.2-4"/>
    <property type="match status" value="1"/>
</dbReference>
<dbReference type="PANTHER" id="PTHR23133:SF2">
    <property type="entry name" value="IMIDAZOLEGLYCEROL-PHOSPHATE DEHYDRATASE"/>
    <property type="match status" value="1"/>
</dbReference>
<dbReference type="PANTHER" id="PTHR23133">
    <property type="entry name" value="IMIDAZOLEGLYCEROL-PHOSPHATE DEHYDRATASE HIS7"/>
    <property type="match status" value="1"/>
</dbReference>
<dbReference type="Pfam" id="PF00475">
    <property type="entry name" value="IGPD"/>
    <property type="match status" value="1"/>
</dbReference>
<dbReference type="SUPFAM" id="SSF54211">
    <property type="entry name" value="Ribosomal protein S5 domain 2-like"/>
    <property type="match status" value="2"/>
</dbReference>
<dbReference type="PROSITE" id="PS00954">
    <property type="entry name" value="IGP_DEHYDRATASE_1"/>
    <property type="match status" value="1"/>
</dbReference>
<dbReference type="PROSITE" id="PS00955">
    <property type="entry name" value="IGP_DEHYDRATASE_2"/>
    <property type="match status" value="1"/>
</dbReference>
<gene>
    <name evidence="1" type="primary">hisB</name>
    <name type="ordered locus">MmarC7_1567</name>
</gene>
<feature type="chain" id="PRO_1000010297" description="Imidazoleglycerol-phosphate dehydratase">
    <location>
        <begin position="1"/>
        <end position="190"/>
    </location>
</feature>
<accession>A6VJJ9</accession>
<protein>
    <recommendedName>
        <fullName evidence="1">Imidazoleglycerol-phosphate dehydratase</fullName>
        <shortName evidence="1">IGPD</shortName>
        <ecNumber evidence="1">4.2.1.19</ecNumber>
    </recommendedName>
</protein>
<name>HIS7_METM7</name>
<keyword id="KW-0028">Amino-acid biosynthesis</keyword>
<keyword id="KW-0963">Cytoplasm</keyword>
<keyword id="KW-0368">Histidine biosynthesis</keyword>
<keyword id="KW-0456">Lyase</keyword>
<evidence type="ECO:0000255" key="1">
    <source>
        <dbReference type="HAMAP-Rule" id="MF_00076"/>
    </source>
</evidence>
<reference key="1">
    <citation type="submission" date="2007-06" db="EMBL/GenBank/DDBJ databases">
        <title>Complete sequence of Methanococcus maripaludis C7.</title>
        <authorList>
            <consortium name="US DOE Joint Genome Institute"/>
            <person name="Copeland A."/>
            <person name="Lucas S."/>
            <person name="Lapidus A."/>
            <person name="Barry K."/>
            <person name="Glavina del Rio T."/>
            <person name="Dalin E."/>
            <person name="Tice H."/>
            <person name="Pitluck S."/>
            <person name="Clum A."/>
            <person name="Schmutz J."/>
            <person name="Larimer F."/>
            <person name="Land M."/>
            <person name="Hauser L."/>
            <person name="Kyrpides N."/>
            <person name="Anderson I."/>
            <person name="Sieprawska-Lupa M."/>
            <person name="Whitman W.B."/>
            <person name="Richardson P."/>
        </authorList>
    </citation>
    <scope>NUCLEOTIDE SEQUENCE [LARGE SCALE GENOMIC DNA]</scope>
    <source>
        <strain>C7 / ATCC BAA-1331</strain>
    </source>
</reference>
<comment type="catalytic activity">
    <reaction evidence="1">
        <text>D-erythro-1-(imidazol-4-yl)glycerol 3-phosphate = 3-(imidazol-4-yl)-2-oxopropyl phosphate + H2O</text>
        <dbReference type="Rhea" id="RHEA:11040"/>
        <dbReference type="ChEBI" id="CHEBI:15377"/>
        <dbReference type="ChEBI" id="CHEBI:57766"/>
        <dbReference type="ChEBI" id="CHEBI:58278"/>
        <dbReference type="EC" id="4.2.1.19"/>
    </reaction>
</comment>
<comment type="pathway">
    <text evidence="1">Amino-acid biosynthesis; L-histidine biosynthesis; L-histidine from 5-phospho-alpha-D-ribose 1-diphosphate: step 6/9.</text>
</comment>
<comment type="subcellular location">
    <subcellularLocation>
        <location evidence="1">Cytoplasm</location>
    </subcellularLocation>
</comment>
<comment type="similarity">
    <text evidence="1">Belongs to the imidazoleglycerol-phosphate dehydratase family.</text>
</comment>